<sequence>MESIQSTMKNINLYDIKAAVRKAQNVVMNYTSMEARVREATNNEPWGASTSLMMEIAQGTHNYSQLNEILPMIYRRFTEKTAEEWRQIYKALQLLEFLVKNGSERVVDDARAHQATIKMLRNFHYIDHRQKDQGLNVRTRAKELVELLNDSERIRKERKRARQNRGKFIGVGSDGDSRISTSSKSRFPSFGSSRGSYRTRVYGDGGGFTDYGNGYHDSSSMSDSRDASDNDVEEYNEDGDGGSSDAATANSTRGSRRTTTKQSDKAPEQPKQESAMIDLLGLDNEPSPAQPQTNTSAPLAFEDDGFGDFQSSAAAPASSTLNNASLFMGSQTASTAAKNDDDAFDDFQSAPSAKPASNTAAFSSISFGGFNSLNQLPTSSSAFTPQPTTFNTGYTSAFGMSSGLSNTSSQAGLGLTSQQPTAAKSSGSNGDAFGSLWSSAVNKVHQENSTRERVVSSSSEPVSKTQNFLDNDNLLL</sequence>
<feature type="chain" id="PRO_0000116555" description="ENTH domain-containing protein C794.11c">
    <location>
        <begin position="1"/>
        <end position="476"/>
    </location>
</feature>
<feature type="domain" description="ENTH" evidence="1">
    <location>
        <begin position="30"/>
        <end position="154"/>
    </location>
</feature>
<feature type="region of interest" description="Disordered" evidence="2">
    <location>
        <begin position="157"/>
        <end position="198"/>
    </location>
</feature>
<feature type="region of interest" description="Disordered" evidence="2">
    <location>
        <begin position="213"/>
        <end position="308"/>
    </location>
</feature>
<feature type="region of interest" description="Disordered" evidence="2">
    <location>
        <begin position="410"/>
        <end position="429"/>
    </location>
</feature>
<feature type="region of interest" description="Disordered" evidence="2">
    <location>
        <begin position="444"/>
        <end position="472"/>
    </location>
</feature>
<feature type="compositionally biased region" description="Low complexity" evidence="2">
    <location>
        <begin position="178"/>
        <end position="198"/>
    </location>
</feature>
<feature type="compositionally biased region" description="Low complexity" evidence="2">
    <location>
        <begin position="213"/>
        <end position="222"/>
    </location>
</feature>
<feature type="compositionally biased region" description="Acidic residues" evidence="2">
    <location>
        <begin position="229"/>
        <end position="240"/>
    </location>
</feature>
<feature type="compositionally biased region" description="Basic and acidic residues" evidence="2">
    <location>
        <begin position="262"/>
        <end position="271"/>
    </location>
</feature>
<feature type="compositionally biased region" description="Basic and acidic residues" evidence="2">
    <location>
        <begin position="444"/>
        <end position="454"/>
    </location>
</feature>
<feature type="modified residue" description="Phosphoserine" evidence="3">
    <location>
        <position position="173"/>
    </location>
</feature>
<feature type="modified residue" description="Phosphoserine" evidence="3">
    <location>
        <position position="228"/>
    </location>
</feature>
<feature type="modified residue" description="Phosphotyrosine" evidence="3">
    <location>
        <position position="235"/>
    </location>
</feature>
<feature type="modified residue" description="Phosphoserine" evidence="3">
    <location>
        <position position="243"/>
    </location>
</feature>
<feature type="modified residue" description="Phosphoserine" evidence="3">
    <location>
        <position position="244"/>
    </location>
</feature>
<feature type="modified residue" description="Phosphoserine" evidence="3">
    <location>
        <position position="459"/>
    </location>
</feature>
<reference key="1">
    <citation type="journal article" date="2002" name="Nature">
        <title>The genome sequence of Schizosaccharomyces pombe.</title>
        <authorList>
            <person name="Wood V."/>
            <person name="Gwilliam R."/>
            <person name="Rajandream M.A."/>
            <person name="Lyne M.H."/>
            <person name="Lyne R."/>
            <person name="Stewart A."/>
            <person name="Sgouros J.G."/>
            <person name="Peat N."/>
            <person name="Hayles J."/>
            <person name="Baker S.G."/>
            <person name="Basham D."/>
            <person name="Bowman S."/>
            <person name="Brooks K."/>
            <person name="Brown D."/>
            <person name="Brown S."/>
            <person name="Chillingworth T."/>
            <person name="Churcher C.M."/>
            <person name="Collins M."/>
            <person name="Connor R."/>
            <person name="Cronin A."/>
            <person name="Davis P."/>
            <person name="Feltwell T."/>
            <person name="Fraser A."/>
            <person name="Gentles S."/>
            <person name="Goble A."/>
            <person name="Hamlin N."/>
            <person name="Harris D.E."/>
            <person name="Hidalgo J."/>
            <person name="Hodgson G."/>
            <person name="Holroyd S."/>
            <person name="Hornsby T."/>
            <person name="Howarth S."/>
            <person name="Huckle E.J."/>
            <person name="Hunt S."/>
            <person name="Jagels K."/>
            <person name="James K.D."/>
            <person name="Jones L."/>
            <person name="Jones M."/>
            <person name="Leather S."/>
            <person name="McDonald S."/>
            <person name="McLean J."/>
            <person name="Mooney P."/>
            <person name="Moule S."/>
            <person name="Mungall K.L."/>
            <person name="Murphy L.D."/>
            <person name="Niblett D."/>
            <person name="Odell C."/>
            <person name="Oliver K."/>
            <person name="O'Neil S."/>
            <person name="Pearson D."/>
            <person name="Quail M.A."/>
            <person name="Rabbinowitsch E."/>
            <person name="Rutherford K.M."/>
            <person name="Rutter S."/>
            <person name="Saunders D."/>
            <person name="Seeger K."/>
            <person name="Sharp S."/>
            <person name="Skelton J."/>
            <person name="Simmonds M.N."/>
            <person name="Squares R."/>
            <person name="Squares S."/>
            <person name="Stevens K."/>
            <person name="Taylor K."/>
            <person name="Taylor R.G."/>
            <person name="Tivey A."/>
            <person name="Walsh S.V."/>
            <person name="Warren T."/>
            <person name="Whitehead S."/>
            <person name="Woodward J.R."/>
            <person name="Volckaert G."/>
            <person name="Aert R."/>
            <person name="Robben J."/>
            <person name="Grymonprez B."/>
            <person name="Weltjens I."/>
            <person name="Vanstreels E."/>
            <person name="Rieger M."/>
            <person name="Schaefer M."/>
            <person name="Mueller-Auer S."/>
            <person name="Gabel C."/>
            <person name="Fuchs M."/>
            <person name="Duesterhoeft A."/>
            <person name="Fritzc C."/>
            <person name="Holzer E."/>
            <person name="Moestl D."/>
            <person name="Hilbert H."/>
            <person name="Borzym K."/>
            <person name="Langer I."/>
            <person name="Beck A."/>
            <person name="Lehrach H."/>
            <person name="Reinhardt R."/>
            <person name="Pohl T.M."/>
            <person name="Eger P."/>
            <person name="Zimmermann W."/>
            <person name="Wedler H."/>
            <person name="Wambutt R."/>
            <person name="Purnelle B."/>
            <person name="Goffeau A."/>
            <person name="Cadieu E."/>
            <person name="Dreano S."/>
            <person name="Gloux S."/>
            <person name="Lelaure V."/>
            <person name="Mottier S."/>
            <person name="Galibert F."/>
            <person name="Aves S.J."/>
            <person name="Xiang Z."/>
            <person name="Hunt C."/>
            <person name="Moore K."/>
            <person name="Hurst S.M."/>
            <person name="Lucas M."/>
            <person name="Rochet M."/>
            <person name="Gaillardin C."/>
            <person name="Tallada V.A."/>
            <person name="Garzon A."/>
            <person name="Thode G."/>
            <person name="Daga R.R."/>
            <person name="Cruzado L."/>
            <person name="Jimenez J."/>
            <person name="Sanchez M."/>
            <person name="del Rey F."/>
            <person name="Benito J."/>
            <person name="Dominguez A."/>
            <person name="Revuelta J.L."/>
            <person name="Moreno S."/>
            <person name="Armstrong J."/>
            <person name="Forsburg S.L."/>
            <person name="Cerutti L."/>
            <person name="Lowe T."/>
            <person name="McCombie W.R."/>
            <person name="Paulsen I."/>
            <person name="Potashkin J."/>
            <person name="Shpakovski G.V."/>
            <person name="Ussery D."/>
            <person name="Barrell B.G."/>
            <person name="Nurse P."/>
        </authorList>
    </citation>
    <scope>NUCLEOTIDE SEQUENCE [LARGE SCALE GENOMIC DNA]</scope>
    <source>
        <strain>972 / ATCC 24843</strain>
    </source>
</reference>
<reference key="2">
    <citation type="journal article" date="1997" name="DNA Res.">
        <title>Identification of open reading frames in Schizosaccharomyces pombe cDNAs.</title>
        <authorList>
            <person name="Yoshioka S."/>
            <person name="Kato K."/>
            <person name="Nakai K."/>
            <person name="Okayama H."/>
            <person name="Nojima H."/>
        </authorList>
    </citation>
    <scope>NUCLEOTIDE SEQUENCE [LARGE SCALE MRNA] OF 118-476</scope>
    <source>
        <strain>PR745</strain>
    </source>
</reference>
<reference key="3">
    <citation type="journal article" date="2008" name="J. Proteome Res.">
        <title>Phosphoproteome analysis of fission yeast.</title>
        <authorList>
            <person name="Wilson-Grady J.T."/>
            <person name="Villen J."/>
            <person name="Gygi S.P."/>
        </authorList>
    </citation>
    <scope>PHOSPHORYLATION [LARGE SCALE ANALYSIS] AT SER-173; SER-228; TYR-235; SER-243; SER-244 AND SER-459</scope>
    <scope>IDENTIFICATION BY MASS SPECTROMETRY</scope>
</reference>
<evidence type="ECO:0000255" key="1">
    <source>
        <dbReference type="PROSITE-ProRule" id="PRU00243"/>
    </source>
</evidence>
<evidence type="ECO:0000256" key="2">
    <source>
        <dbReference type="SAM" id="MobiDB-lite"/>
    </source>
</evidence>
<evidence type="ECO:0000269" key="3">
    <source>
    </source>
</evidence>
<accession>P78813</accession>
<proteinExistence type="evidence at protein level"/>
<dbReference type="EMBL" id="CU329672">
    <property type="protein sequence ID" value="CAA19138.1"/>
    <property type="molecule type" value="Genomic_DNA"/>
</dbReference>
<dbReference type="EMBL" id="D89162">
    <property type="protein sequence ID" value="BAA13824.1"/>
    <property type="molecule type" value="mRNA"/>
</dbReference>
<dbReference type="PIR" id="T41619">
    <property type="entry name" value="T41619"/>
</dbReference>
<dbReference type="PIR" id="T42524">
    <property type="entry name" value="T42524"/>
</dbReference>
<dbReference type="SMR" id="P78813"/>
<dbReference type="BioGRID" id="275986">
    <property type="interactions" value="36"/>
</dbReference>
<dbReference type="ELM" id="P78813"/>
<dbReference type="FunCoup" id="P78813">
    <property type="interactions" value="282"/>
</dbReference>
<dbReference type="IntAct" id="P78813">
    <property type="interactions" value="1"/>
</dbReference>
<dbReference type="STRING" id="284812.P78813"/>
<dbReference type="iPTMnet" id="P78813"/>
<dbReference type="PaxDb" id="4896-SPCC794.11c.1"/>
<dbReference type="EnsemblFungi" id="SPCC794.11c.1">
    <property type="protein sequence ID" value="SPCC794.11c.1:pep"/>
    <property type="gene ID" value="SPCC794.11c"/>
</dbReference>
<dbReference type="KEGG" id="spo:2539421"/>
<dbReference type="PomBase" id="SPCC794.11c"/>
<dbReference type="VEuPathDB" id="FungiDB:SPCC794.11c"/>
<dbReference type="eggNOG" id="KOG2056">
    <property type="taxonomic scope" value="Eukaryota"/>
</dbReference>
<dbReference type="HOGENOM" id="CLU_040577_0_1_1"/>
<dbReference type="InParanoid" id="P78813"/>
<dbReference type="OMA" id="CIYARFM"/>
<dbReference type="PhylomeDB" id="P78813"/>
<dbReference type="PRO" id="PR:P78813"/>
<dbReference type="Proteomes" id="UP000002485">
    <property type="component" value="Chromosome III"/>
</dbReference>
<dbReference type="GO" id="GO:0030479">
    <property type="term" value="C:actin cortical patch"/>
    <property type="evidence" value="ECO:0000266"/>
    <property type="project" value="PomBase"/>
</dbReference>
<dbReference type="GO" id="GO:0030125">
    <property type="term" value="C:clathrin vesicle coat"/>
    <property type="evidence" value="ECO:0000318"/>
    <property type="project" value="GO_Central"/>
</dbReference>
<dbReference type="GO" id="GO:0005829">
    <property type="term" value="C:cytosol"/>
    <property type="evidence" value="ECO:0007669"/>
    <property type="project" value="GOC"/>
</dbReference>
<dbReference type="GO" id="GO:0005768">
    <property type="term" value="C:endosome"/>
    <property type="evidence" value="ECO:0000318"/>
    <property type="project" value="GO_Central"/>
</dbReference>
<dbReference type="GO" id="GO:0005794">
    <property type="term" value="C:Golgi apparatus"/>
    <property type="evidence" value="ECO:0007005"/>
    <property type="project" value="PomBase"/>
</dbReference>
<dbReference type="GO" id="GO:0005886">
    <property type="term" value="C:plasma membrane"/>
    <property type="evidence" value="ECO:0000318"/>
    <property type="project" value="GO_Central"/>
</dbReference>
<dbReference type="GO" id="GO:0005802">
    <property type="term" value="C:trans-Golgi network"/>
    <property type="evidence" value="ECO:0000269"/>
    <property type="project" value="PomBase"/>
</dbReference>
<dbReference type="GO" id="GO:0030276">
    <property type="term" value="F:clathrin binding"/>
    <property type="evidence" value="ECO:0000318"/>
    <property type="project" value="GO_Central"/>
</dbReference>
<dbReference type="GO" id="GO:0180020">
    <property type="term" value="F:membrane bending activity"/>
    <property type="evidence" value="ECO:0000304"/>
    <property type="project" value="PomBase"/>
</dbReference>
<dbReference type="GO" id="GO:0005543">
    <property type="term" value="F:phospholipid binding"/>
    <property type="evidence" value="ECO:0000318"/>
    <property type="project" value="GO_Central"/>
</dbReference>
<dbReference type="GO" id="GO:0030036">
    <property type="term" value="P:actin cytoskeleton organization"/>
    <property type="evidence" value="ECO:0000266"/>
    <property type="project" value="PomBase"/>
</dbReference>
<dbReference type="GO" id="GO:0006897">
    <property type="term" value="P:endocytosis"/>
    <property type="evidence" value="ECO:0000318"/>
    <property type="project" value="GO_Central"/>
</dbReference>
<dbReference type="GO" id="GO:0006895">
    <property type="term" value="P:Golgi to endosome transport"/>
    <property type="evidence" value="ECO:0000315"/>
    <property type="project" value="PomBase"/>
</dbReference>
<dbReference type="GO" id="GO:0042147">
    <property type="term" value="P:retrograde transport, endosome to Golgi"/>
    <property type="evidence" value="ECO:0000315"/>
    <property type="project" value="PomBase"/>
</dbReference>
<dbReference type="CDD" id="cd16992">
    <property type="entry name" value="ENTH_Ent3"/>
    <property type="match status" value="1"/>
</dbReference>
<dbReference type="FunFam" id="1.25.40.90:FF:000006">
    <property type="entry name" value="Clathrin interactor 1"/>
    <property type="match status" value="1"/>
</dbReference>
<dbReference type="Gene3D" id="1.25.40.90">
    <property type="match status" value="1"/>
</dbReference>
<dbReference type="InterPro" id="IPR013809">
    <property type="entry name" value="ENTH"/>
</dbReference>
<dbReference type="InterPro" id="IPR008942">
    <property type="entry name" value="ENTH_VHS"/>
</dbReference>
<dbReference type="PANTHER" id="PTHR12276:SF45">
    <property type="entry name" value="CLATHRIN INTERACTOR 1"/>
    <property type="match status" value="1"/>
</dbReference>
<dbReference type="PANTHER" id="PTHR12276">
    <property type="entry name" value="EPSIN/ENT-RELATED"/>
    <property type="match status" value="1"/>
</dbReference>
<dbReference type="Pfam" id="PF01417">
    <property type="entry name" value="ENTH"/>
    <property type="match status" value="1"/>
</dbReference>
<dbReference type="SMART" id="SM00273">
    <property type="entry name" value="ENTH"/>
    <property type="match status" value="1"/>
</dbReference>
<dbReference type="SUPFAM" id="SSF48464">
    <property type="entry name" value="ENTH/VHS domain"/>
    <property type="match status" value="1"/>
</dbReference>
<dbReference type="PROSITE" id="PS50942">
    <property type="entry name" value="ENTH"/>
    <property type="match status" value="1"/>
</dbReference>
<gene>
    <name type="ORF">SPCC794.11c</name>
</gene>
<organism>
    <name type="scientific">Schizosaccharomyces pombe (strain 972 / ATCC 24843)</name>
    <name type="common">Fission yeast</name>
    <dbReference type="NCBI Taxonomy" id="284812"/>
    <lineage>
        <taxon>Eukaryota</taxon>
        <taxon>Fungi</taxon>
        <taxon>Dikarya</taxon>
        <taxon>Ascomycota</taxon>
        <taxon>Taphrinomycotina</taxon>
        <taxon>Schizosaccharomycetes</taxon>
        <taxon>Schizosaccharomycetales</taxon>
        <taxon>Schizosaccharomycetaceae</taxon>
        <taxon>Schizosaccharomyces</taxon>
    </lineage>
</organism>
<keyword id="KW-0597">Phosphoprotein</keyword>
<keyword id="KW-1185">Reference proteome</keyword>
<protein>
    <recommendedName>
        <fullName>ENTH domain-containing protein C794.11c</fullName>
    </recommendedName>
</protein>
<name>YCTB_SCHPO</name>